<organism>
    <name type="scientific">Arabidopsis thaliana</name>
    <name type="common">Mouse-ear cress</name>
    <dbReference type="NCBI Taxonomy" id="3702"/>
    <lineage>
        <taxon>Eukaryota</taxon>
        <taxon>Viridiplantae</taxon>
        <taxon>Streptophyta</taxon>
        <taxon>Embryophyta</taxon>
        <taxon>Tracheophyta</taxon>
        <taxon>Spermatophyta</taxon>
        <taxon>Magnoliopsida</taxon>
        <taxon>eudicotyledons</taxon>
        <taxon>Gunneridae</taxon>
        <taxon>Pentapetalae</taxon>
        <taxon>rosids</taxon>
        <taxon>malvids</taxon>
        <taxon>Brassicales</taxon>
        <taxon>Brassicaceae</taxon>
        <taxon>Camelineae</taxon>
        <taxon>Arabidopsis</taxon>
    </lineage>
</organism>
<dbReference type="EMBL" id="AC005851">
    <property type="protein sequence ID" value="AAC98457.1"/>
    <property type="molecule type" value="Genomic_DNA"/>
</dbReference>
<dbReference type="EMBL" id="CP002685">
    <property type="protein sequence ID" value="AEC08078.1"/>
    <property type="molecule type" value="Genomic_DNA"/>
</dbReference>
<dbReference type="EMBL" id="AY501361">
    <property type="protein sequence ID" value="AAR99373.1"/>
    <property type="status" value="ALT_INIT"/>
    <property type="molecule type" value="mRNA"/>
</dbReference>
<dbReference type="EMBL" id="AY924752">
    <property type="protein sequence ID" value="AAX23827.1"/>
    <property type="molecule type" value="mRNA"/>
</dbReference>
<dbReference type="PIR" id="F84680">
    <property type="entry name" value="F84680"/>
</dbReference>
<dbReference type="RefSeq" id="NP_180376.1">
    <property type="nucleotide sequence ID" value="NM_128369.2"/>
</dbReference>
<dbReference type="SMR" id="Q9ZUV1"/>
<dbReference type="FunCoup" id="Q9ZUV1">
    <property type="interactions" value="14"/>
</dbReference>
<dbReference type="STRING" id="3702.Q9ZUV1"/>
<dbReference type="PaxDb" id="3702-AT2G28090.1"/>
<dbReference type="EnsemblPlants" id="AT2G28090.1">
    <property type="protein sequence ID" value="AT2G28090.1"/>
    <property type="gene ID" value="AT2G28090"/>
</dbReference>
<dbReference type="GeneID" id="817354"/>
<dbReference type="Gramene" id="AT2G28090.1">
    <property type="protein sequence ID" value="AT2G28090.1"/>
    <property type="gene ID" value="AT2G28090"/>
</dbReference>
<dbReference type="KEGG" id="ath:AT2G28090"/>
<dbReference type="Araport" id="AT2G28090"/>
<dbReference type="TAIR" id="AT2G28090"/>
<dbReference type="eggNOG" id="KOG1603">
    <property type="taxonomic scope" value="Eukaryota"/>
</dbReference>
<dbReference type="HOGENOM" id="CLU_039886_3_1_1"/>
<dbReference type="InParanoid" id="Q9ZUV1"/>
<dbReference type="OMA" id="CACDGCI"/>
<dbReference type="PhylomeDB" id="Q9ZUV1"/>
<dbReference type="PRO" id="PR:Q9ZUV1"/>
<dbReference type="Proteomes" id="UP000006548">
    <property type="component" value="Chromosome 2"/>
</dbReference>
<dbReference type="ExpressionAtlas" id="Q9ZUV1">
    <property type="expression patterns" value="baseline and differential"/>
</dbReference>
<dbReference type="GO" id="GO:0046872">
    <property type="term" value="F:metal ion binding"/>
    <property type="evidence" value="ECO:0007669"/>
    <property type="project" value="UniProtKB-KW"/>
</dbReference>
<dbReference type="CDD" id="cd00371">
    <property type="entry name" value="HMA"/>
    <property type="match status" value="1"/>
</dbReference>
<dbReference type="Gene3D" id="3.30.70.100">
    <property type="match status" value="2"/>
</dbReference>
<dbReference type="InterPro" id="IPR044594">
    <property type="entry name" value="HIPP01/3/5/6"/>
</dbReference>
<dbReference type="InterPro" id="IPR006121">
    <property type="entry name" value="HMA_dom"/>
</dbReference>
<dbReference type="InterPro" id="IPR036163">
    <property type="entry name" value="HMA_dom_sf"/>
</dbReference>
<dbReference type="PANTHER" id="PTHR46413:SF13">
    <property type="entry name" value="HEAVY METAL-ASSOCIATED ISOPRENYLATED PLANT PROTEIN 1"/>
    <property type="match status" value="1"/>
</dbReference>
<dbReference type="PANTHER" id="PTHR46413">
    <property type="entry name" value="HEAVY METAL-ASSOCIATED ISOPRENYLATED PLANT PROTEIN 6"/>
    <property type="match status" value="1"/>
</dbReference>
<dbReference type="Pfam" id="PF00403">
    <property type="entry name" value="HMA"/>
    <property type="match status" value="1"/>
</dbReference>
<dbReference type="SUPFAM" id="SSF55008">
    <property type="entry name" value="HMA, heavy metal-associated domain"/>
    <property type="match status" value="2"/>
</dbReference>
<dbReference type="PROSITE" id="PS50846">
    <property type="entry name" value="HMA_2"/>
    <property type="match status" value="2"/>
</dbReference>
<sequence>MENPQVCECYHGDVEEEKKKKQNNTTSPVHVVLKIDFHCDGCIARIVRLSRRLEGVETVRADPDSNKLTLIGFIMDPVKIAEKLQKKSKKKVELISPKPKKDTKENNEKKANDKTQTVVAVTTVVLKVNCSCDGCIKRIQKAVSTTKGVYQVKMDKEKETVTVMGTMDIKSVTDNLKRKLKKTVQVVPEKKKKKKDKDNAEVNTKVGSPCQPGNGCTHGIGPYRFMEGPMTGFFSEEDQSYCSVM</sequence>
<reference key="1">
    <citation type="journal article" date="1999" name="Nature">
        <title>Sequence and analysis of chromosome 2 of the plant Arabidopsis thaliana.</title>
        <authorList>
            <person name="Lin X."/>
            <person name="Kaul S."/>
            <person name="Rounsley S.D."/>
            <person name="Shea T.P."/>
            <person name="Benito M.-I."/>
            <person name="Town C.D."/>
            <person name="Fujii C.Y."/>
            <person name="Mason T.M."/>
            <person name="Bowman C.L."/>
            <person name="Barnstead M.E."/>
            <person name="Feldblyum T.V."/>
            <person name="Buell C.R."/>
            <person name="Ketchum K.A."/>
            <person name="Lee J.J."/>
            <person name="Ronning C.M."/>
            <person name="Koo H.L."/>
            <person name="Moffat K.S."/>
            <person name="Cronin L.A."/>
            <person name="Shen M."/>
            <person name="Pai G."/>
            <person name="Van Aken S."/>
            <person name="Umayam L."/>
            <person name="Tallon L.J."/>
            <person name="Gill J.E."/>
            <person name="Adams M.D."/>
            <person name="Carrera A.J."/>
            <person name="Creasy T.H."/>
            <person name="Goodman H.M."/>
            <person name="Somerville C.R."/>
            <person name="Copenhaver G.P."/>
            <person name="Preuss D."/>
            <person name="Nierman W.C."/>
            <person name="White O."/>
            <person name="Eisen J.A."/>
            <person name="Salzberg S.L."/>
            <person name="Fraser C.M."/>
            <person name="Venter J.C."/>
        </authorList>
    </citation>
    <scope>NUCLEOTIDE SEQUENCE [LARGE SCALE GENOMIC DNA]</scope>
    <source>
        <strain>cv. Columbia</strain>
    </source>
</reference>
<reference key="2">
    <citation type="journal article" date="2017" name="Plant J.">
        <title>Araport11: a complete reannotation of the Arabidopsis thaliana reference genome.</title>
        <authorList>
            <person name="Cheng C.Y."/>
            <person name="Krishnakumar V."/>
            <person name="Chan A.P."/>
            <person name="Thibaud-Nissen F."/>
            <person name="Schobel S."/>
            <person name="Town C.D."/>
        </authorList>
    </citation>
    <scope>GENOME REANNOTATION</scope>
    <source>
        <strain>cv. Columbia</strain>
    </source>
</reference>
<reference key="3">
    <citation type="journal article" date="2005" name="Plant Physiol.">
        <title>Analysis of the cDNAs of hypothetical genes on Arabidopsis chromosome 2 reveals numerous transcript variants.</title>
        <authorList>
            <person name="Xiao Y.-L."/>
            <person name="Smith S.R."/>
            <person name="Ishmael N."/>
            <person name="Redman J.C."/>
            <person name="Kumar N."/>
            <person name="Monaghan E.L."/>
            <person name="Ayele M."/>
            <person name="Haas B.J."/>
            <person name="Wu H.C."/>
            <person name="Town C.D."/>
        </authorList>
    </citation>
    <scope>NUCLEOTIDE SEQUENCE [LARGE SCALE MRNA] OF 23-245</scope>
    <source>
        <strain>cv. Columbia</strain>
    </source>
</reference>
<reference key="4">
    <citation type="submission" date="2005-02" db="EMBL/GenBank/DDBJ databases">
        <authorList>
            <person name="Underwood B.A."/>
            <person name="Xiao Y.-L."/>
            <person name="Moskal W.A. Jr."/>
            <person name="Monaghan E.L."/>
            <person name="Wang W."/>
            <person name="Redman J.C."/>
            <person name="Wu H.C."/>
            <person name="Utterback T."/>
            <person name="Town C.D."/>
        </authorList>
    </citation>
    <scope>NUCLEOTIDE SEQUENCE [LARGE SCALE MRNA] OF 75-245</scope>
    <source>
        <strain>cv. Columbia</strain>
    </source>
</reference>
<reference key="5">
    <citation type="journal article" date="2010" name="Metallomics">
        <title>Metallochaperone-like genes in Arabidopsis thaliana.</title>
        <authorList>
            <person name="Tehseen M."/>
            <person name="Cairns N."/>
            <person name="Sherson S."/>
            <person name="Cobbett C.S."/>
        </authorList>
    </citation>
    <scope>GENE FAMILY</scope>
    <scope>NOMENCLATURE</scope>
</reference>
<reference key="6">
    <citation type="journal article" date="2013" name="FEBS J.">
        <title>Heavy metal-associated isoprenylated plant protein (HIPP): characterization of a family of proteins exclusive to plants.</title>
        <authorList>
            <person name="de Abreu-Neto J.B."/>
            <person name="Turchetto-Zolet A.C."/>
            <person name="de Oliveira L.F."/>
            <person name="Zanettini M.H."/>
            <person name="Margis-Pinheiro M."/>
        </authorList>
    </citation>
    <scope>GENE FAMILY</scope>
    <scope>NOMENCLATURE</scope>
</reference>
<accession>Q9ZUV1</accession>
<accession>Q6RF40</accession>
<evidence type="ECO:0000250" key="1">
    <source>
        <dbReference type="UniProtKB" id="Q9LZF1"/>
    </source>
</evidence>
<evidence type="ECO:0000250" key="2">
    <source>
        <dbReference type="UniProtKB" id="Q9SZN7"/>
    </source>
</evidence>
<evidence type="ECO:0000255" key="3">
    <source>
        <dbReference type="PROSITE-ProRule" id="PRU00280"/>
    </source>
</evidence>
<evidence type="ECO:0000256" key="4">
    <source>
        <dbReference type="SAM" id="MobiDB-lite"/>
    </source>
</evidence>
<evidence type="ECO:0000303" key="5">
    <source>
    </source>
</evidence>
<evidence type="ECO:0000303" key="6">
    <source>
    </source>
</evidence>
<evidence type="ECO:0000305" key="7"/>
<evidence type="ECO:0000312" key="8">
    <source>
        <dbReference type="Araport" id="AT2G28090"/>
    </source>
</evidence>
<evidence type="ECO:0000312" key="9">
    <source>
        <dbReference type="EMBL" id="AAC98457.1"/>
    </source>
</evidence>
<gene>
    <name evidence="5 6" type="primary">HIPP01</name>
    <name evidence="8" type="ordered locus">At2g28090</name>
    <name evidence="9" type="ORF">F24D13.12</name>
</gene>
<feature type="chain" id="PRO_0000437793" description="Heavy metal-associated isoprenylated plant protein 1">
    <location>
        <begin position="1"/>
        <end position="242"/>
    </location>
</feature>
<feature type="propeptide" id="PRO_0000437794" description="Removed in mature form" evidence="7">
    <location>
        <begin position="243"/>
        <end position="245"/>
    </location>
</feature>
<feature type="domain" description="HMA 1" evidence="3">
    <location>
        <begin position="28"/>
        <end position="92"/>
    </location>
</feature>
<feature type="domain" description="HMA 2" evidence="3">
    <location>
        <begin position="121"/>
        <end position="188"/>
    </location>
</feature>
<feature type="region of interest" description="Disordered" evidence="4">
    <location>
        <begin position="91"/>
        <end position="113"/>
    </location>
</feature>
<feature type="compositionally biased region" description="Basic and acidic residues" evidence="4">
    <location>
        <begin position="99"/>
        <end position="113"/>
    </location>
</feature>
<feature type="binding site" evidence="3">
    <location>
        <position position="39"/>
    </location>
    <ligand>
        <name>a metal cation</name>
        <dbReference type="ChEBI" id="CHEBI:25213"/>
        <label>1</label>
    </ligand>
</feature>
<feature type="binding site" evidence="3">
    <location>
        <position position="42"/>
    </location>
    <ligand>
        <name>a metal cation</name>
        <dbReference type="ChEBI" id="CHEBI:25213"/>
        <label>1</label>
    </ligand>
</feature>
<feature type="binding site" evidence="3">
    <location>
        <position position="132"/>
    </location>
    <ligand>
        <name>a metal cation</name>
        <dbReference type="ChEBI" id="CHEBI:25213"/>
        <label>2</label>
    </ligand>
</feature>
<feature type="binding site" evidence="3">
    <location>
        <position position="135"/>
    </location>
    <ligand>
        <name>a metal cation</name>
        <dbReference type="ChEBI" id="CHEBI:25213"/>
        <label>2</label>
    </ligand>
</feature>
<feature type="modified residue" description="Cysteine methyl ester" evidence="2">
    <location>
        <position position="242"/>
    </location>
</feature>
<feature type="lipid moiety-binding region" description="S-farnesyl cysteine" evidence="2">
    <location>
        <position position="242"/>
    </location>
</feature>
<proteinExistence type="evidence at transcript level"/>
<keyword id="KW-0449">Lipoprotein</keyword>
<keyword id="KW-0479">Metal-binding</keyword>
<keyword id="KW-0488">Methylation</keyword>
<keyword id="KW-0636">Prenylation</keyword>
<keyword id="KW-1185">Reference proteome</keyword>
<keyword id="KW-0677">Repeat</keyword>
<name>HIP1_ARATH</name>
<comment type="function">
    <text evidence="1">Heavy-metal-binding protein.</text>
</comment>
<comment type="similarity">
    <text evidence="7">Belongs to the HIPP family.</text>
</comment>
<comment type="sequence caution" evidence="7">
    <conflict type="erroneous initiation">
        <sequence resource="EMBL-CDS" id="AAR99373"/>
    </conflict>
    <text>Truncated N-terminus.</text>
</comment>
<protein>
    <recommendedName>
        <fullName evidence="5 6">Heavy metal-associated isoprenylated plant protein 1</fullName>
        <shortName evidence="5 6">AtHIP01</shortName>
    </recommendedName>
</protein>